<accession>P52685</accession>
<feature type="chain" id="PRO_0000105671" description="Mau operon transcriptional activator">
    <location>
        <begin position="1"/>
        <end position="283"/>
    </location>
</feature>
<feature type="domain" description="HTH lysR-type" evidence="1">
    <location>
        <begin position="1"/>
        <end position="58"/>
    </location>
</feature>
<feature type="DNA-binding region" description="H-T-H motif" evidence="1">
    <location>
        <begin position="18"/>
        <end position="37"/>
    </location>
</feature>
<gene>
    <name type="primary">mauR</name>
</gene>
<proteinExistence type="inferred from homology"/>
<keyword id="KW-0010">Activator</keyword>
<keyword id="KW-0238">DNA-binding</keyword>
<keyword id="KW-0804">Transcription</keyword>
<keyword id="KW-0805">Transcription regulation</keyword>
<protein>
    <recommendedName>
        <fullName>Mau operon transcriptional activator</fullName>
    </recommendedName>
</protein>
<reference key="1">
    <citation type="journal article" date="1994" name="Eur. J. Biochem.">
        <title>Expression of the mau genes involved in methylamine metabolism in Paracoccus denitrificans is under control of a LysR-type transcriptional activator.</title>
        <authorList>
            <person name="van Spanning R.J.M."/>
            <person name="van der Palen C.J."/>
            <person name="Slotboom D.J."/>
            <person name="Reijnders W.N."/>
            <person name="Stouthamer A.H."/>
            <person name="Duine J.A."/>
        </authorList>
    </citation>
    <scope>NUCLEOTIDE SEQUENCE [GENOMIC DNA]</scope>
    <source>
        <strain>ATCC 17741 / DSM 413 / NBRC 16712 / NCCB 22021 / NCIMB 11627</strain>
    </source>
</reference>
<comment type="function">
    <text>Transcriptional activator of the mau genes involved in methylamine metabolism.</text>
</comment>
<comment type="similarity">
    <text evidence="2">Belongs to the LysR transcriptional regulatory family.</text>
</comment>
<dbReference type="EMBL" id="U12464">
    <property type="protein sequence ID" value="AAA56722.1"/>
    <property type="molecule type" value="Genomic_DNA"/>
</dbReference>
<dbReference type="PIR" id="S51047">
    <property type="entry name" value="S51047"/>
</dbReference>
<dbReference type="RefSeq" id="WP_011750948.1">
    <property type="nucleotide sequence ID" value="NZ_JAOSHR010000003.1"/>
</dbReference>
<dbReference type="SMR" id="P52685"/>
<dbReference type="GeneID" id="93454750"/>
<dbReference type="OMA" id="RCVTDNV"/>
<dbReference type="GO" id="GO:0003677">
    <property type="term" value="F:DNA binding"/>
    <property type="evidence" value="ECO:0007669"/>
    <property type="project" value="UniProtKB-KW"/>
</dbReference>
<dbReference type="GO" id="GO:0003700">
    <property type="term" value="F:DNA-binding transcription factor activity"/>
    <property type="evidence" value="ECO:0007669"/>
    <property type="project" value="InterPro"/>
</dbReference>
<dbReference type="Gene3D" id="3.40.190.10">
    <property type="entry name" value="Periplasmic binding protein-like II"/>
    <property type="match status" value="1"/>
</dbReference>
<dbReference type="Gene3D" id="1.10.10.10">
    <property type="entry name" value="Winged helix-like DNA-binding domain superfamily/Winged helix DNA-binding domain"/>
    <property type="match status" value="1"/>
</dbReference>
<dbReference type="InterPro" id="IPR050176">
    <property type="entry name" value="LTTR"/>
</dbReference>
<dbReference type="InterPro" id="IPR005119">
    <property type="entry name" value="LysR_subst-bd"/>
</dbReference>
<dbReference type="InterPro" id="IPR000847">
    <property type="entry name" value="Tscrpt_reg_HTH_LysR"/>
</dbReference>
<dbReference type="InterPro" id="IPR036388">
    <property type="entry name" value="WH-like_DNA-bd_sf"/>
</dbReference>
<dbReference type="InterPro" id="IPR036390">
    <property type="entry name" value="WH_DNA-bd_sf"/>
</dbReference>
<dbReference type="PANTHER" id="PTHR30579">
    <property type="entry name" value="TRANSCRIPTIONAL REGULATOR"/>
    <property type="match status" value="1"/>
</dbReference>
<dbReference type="PANTHER" id="PTHR30579:SF3">
    <property type="entry name" value="TRANSCRIPTIONAL REGULATORY PROTEIN"/>
    <property type="match status" value="1"/>
</dbReference>
<dbReference type="Pfam" id="PF00126">
    <property type="entry name" value="HTH_1"/>
    <property type="match status" value="1"/>
</dbReference>
<dbReference type="Pfam" id="PF03466">
    <property type="entry name" value="LysR_substrate"/>
    <property type="match status" value="1"/>
</dbReference>
<dbReference type="SUPFAM" id="SSF53850">
    <property type="entry name" value="Periplasmic binding protein-like II"/>
    <property type="match status" value="1"/>
</dbReference>
<dbReference type="SUPFAM" id="SSF46785">
    <property type="entry name" value="Winged helix' DNA-binding domain"/>
    <property type="match status" value="1"/>
</dbReference>
<dbReference type="PROSITE" id="PS50931">
    <property type="entry name" value="HTH_LYSR"/>
    <property type="match status" value="1"/>
</dbReference>
<evidence type="ECO:0000255" key="1">
    <source>
        <dbReference type="PROSITE-ProRule" id="PRU00253"/>
    </source>
</evidence>
<evidence type="ECO:0000305" key="2"/>
<sequence length="283" mass="32107">MNWDDLRVVAAINRCGSFNRAAKMLNVEETTIARRLARLEGSLGCVLFQAVDGQRRPTEQCRALLQPLVLMEQAAEAITLQLERQERPLRNFRLTTIDAIAQHYLAPTLADLLIAEPELSLQLETSDDNVDMARWHADIAIRLGRPRRGNFTMRRVGEMRFNLVLPRGAAPEDLVLAAYPDPLMEVPEMQDFQQYFPGRQARLRSANLRVIRVLVDSGRAAAVLPDFLSVDLVGDERFQVHRLPARREIWLLAQPHLRDDPLARRVTNWCADLFAETLAGDAV</sequence>
<name>MAUR_PARDE</name>
<organism>
    <name type="scientific">Paracoccus denitrificans</name>
    <dbReference type="NCBI Taxonomy" id="266"/>
    <lineage>
        <taxon>Bacteria</taxon>
        <taxon>Pseudomonadati</taxon>
        <taxon>Pseudomonadota</taxon>
        <taxon>Alphaproteobacteria</taxon>
        <taxon>Rhodobacterales</taxon>
        <taxon>Paracoccaceae</taxon>
        <taxon>Paracoccus</taxon>
    </lineage>
</organism>